<gene>
    <name evidence="1" type="primary">aroC</name>
    <name type="ordered locus">Mlut_12680</name>
</gene>
<reference key="1">
    <citation type="journal article" date="2010" name="J. Bacteriol.">
        <title>Genome sequence of the Fleming strain of Micrococcus luteus, a simple free-living actinobacterium.</title>
        <authorList>
            <person name="Young M."/>
            <person name="Artsatbanov V."/>
            <person name="Beller H.R."/>
            <person name="Chandra G."/>
            <person name="Chater K.F."/>
            <person name="Dover L.G."/>
            <person name="Goh E.B."/>
            <person name="Kahan T."/>
            <person name="Kaprelyants A.S."/>
            <person name="Kyrpides N."/>
            <person name="Lapidus A."/>
            <person name="Lowry S.R."/>
            <person name="Lykidis A."/>
            <person name="Mahillon J."/>
            <person name="Markowitz V."/>
            <person name="Mavromatis K."/>
            <person name="Mukamolova G.V."/>
            <person name="Oren A."/>
            <person name="Rokem J.S."/>
            <person name="Smith M.C."/>
            <person name="Young D.I."/>
            <person name="Greenblatt C.L."/>
        </authorList>
    </citation>
    <scope>NUCLEOTIDE SEQUENCE [LARGE SCALE GENOMIC DNA]</scope>
    <source>
        <strain>ATCC 4698 / DSM 20030 / JCM 1464 / CCM 169 / CCUG 5858 / IAM 1056 / NBRC 3333 / NCIMB 9278 / NCTC 2665 / VKM Ac-2230</strain>
    </source>
</reference>
<protein>
    <recommendedName>
        <fullName evidence="1">Chorismate synthase</fullName>
        <shortName evidence="1">CS</shortName>
        <ecNumber evidence="1">4.2.3.5</ecNumber>
    </recommendedName>
    <alternativeName>
        <fullName evidence="1">5-enolpyruvylshikimate-3-phosphate phospholyase</fullName>
    </alternativeName>
</protein>
<sequence length="411" mass="42827">MVRWLTAGESHGPALTGIVEGLPAGIPVTTQDVQDALARRRLGYGRGARMKFEQDAVTILGGVRHGRTLGSPVAIQVGNTEWPKWEKVMAADPVPAEELDGLARNAALTRPRPGHADLTGMQKYGFDEARPLLERASARETAARVALGTVARAFLGELGVRIVSHTVAFGEAALPESHPFPVPEDEARLDADPVRCLDPQTSAAMVAEVDDAHRAGETLGGVVEVLVYSVPIGLGSHVHWDRRLDARLAGALMGIQAIKGVQVGDGFATAARRGSAAHDGIARGADGRPRRTSDRAGGIEAGMSTGGLLRVSAAMKPIATVPRALPTVDVATGVETTAHHQRSDVAAVPAAGIVAEAMVALVLADAMLEKFGGDSVAETRRNLEAFRAAVPALPEPGADVVEDGPMGDPLP</sequence>
<accession>C5CCG1</accession>
<feature type="chain" id="PRO_1000204955" description="Chorismate synthase">
    <location>
        <begin position="1"/>
        <end position="411"/>
    </location>
</feature>
<feature type="region of interest" description="Disordered" evidence="2">
    <location>
        <begin position="278"/>
        <end position="299"/>
    </location>
</feature>
<feature type="compositionally biased region" description="Basic and acidic residues" evidence="2">
    <location>
        <begin position="285"/>
        <end position="294"/>
    </location>
</feature>
<feature type="binding site" evidence="1">
    <location>
        <position position="40"/>
    </location>
    <ligand>
        <name>NADP(+)</name>
        <dbReference type="ChEBI" id="CHEBI:58349"/>
    </ligand>
</feature>
<feature type="binding site" evidence="1">
    <location>
        <position position="46"/>
    </location>
    <ligand>
        <name>NADP(+)</name>
        <dbReference type="ChEBI" id="CHEBI:58349"/>
    </ligand>
</feature>
<feature type="binding site" evidence="1">
    <location>
        <begin position="135"/>
        <end position="137"/>
    </location>
    <ligand>
        <name>FMN</name>
        <dbReference type="ChEBI" id="CHEBI:58210"/>
    </ligand>
</feature>
<feature type="binding site" evidence="1">
    <location>
        <begin position="256"/>
        <end position="257"/>
    </location>
    <ligand>
        <name>FMN</name>
        <dbReference type="ChEBI" id="CHEBI:58210"/>
    </ligand>
</feature>
<feature type="binding site" evidence="1">
    <location>
        <position position="301"/>
    </location>
    <ligand>
        <name>FMN</name>
        <dbReference type="ChEBI" id="CHEBI:58210"/>
    </ligand>
</feature>
<feature type="binding site" evidence="1">
    <location>
        <begin position="316"/>
        <end position="320"/>
    </location>
    <ligand>
        <name>FMN</name>
        <dbReference type="ChEBI" id="CHEBI:58210"/>
    </ligand>
</feature>
<feature type="binding site" evidence="1">
    <location>
        <position position="342"/>
    </location>
    <ligand>
        <name>FMN</name>
        <dbReference type="ChEBI" id="CHEBI:58210"/>
    </ligand>
</feature>
<organism>
    <name type="scientific">Micrococcus luteus (strain ATCC 4698 / DSM 20030 / JCM 1464 / CCM 169 / CCUG 5858 / IAM 1056 / NBRC 3333 / NCIMB 9278 / NCTC 2665 / VKM Ac-2230)</name>
    <name type="common">Micrococcus lysodeikticus</name>
    <dbReference type="NCBI Taxonomy" id="465515"/>
    <lineage>
        <taxon>Bacteria</taxon>
        <taxon>Bacillati</taxon>
        <taxon>Actinomycetota</taxon>
        <taxon>Actinomycetes</taxon>
        <taxon>Micrococcales</taxon>
        <taxon>Micrococcaceae</taxon>
        <taxon>Micrococcus</taxon>
    </lineage>
</organism>
<keyword id="KW-0028">Amino-acid biosynthesis</keyword>
<keyword id="KW-0057">Aromatic amino acid biosynthesis</keyword>
<keyword id="KW-0274">FAD</keyword>
<keyword id="KW-0285">Flavoprotein</keyword>
<keyword id="KW-0288">FMN</keyword>
<keyword id="KW-0456">Lyase</keyword>
<keyword id="KW-0521">NADP</keyword>
<keyword id="KW-1185">Reference proteome</keyword>
<dbReference type="EC" id="4.2.3.5" evidence="1"/>
<dbReference type="EMBL" id="CP001628">
    <property type="protein sequence ID" value="ACS30773.1"/>
    <property type="molecule type" value="Genomic_DNA"/>
</dbReference>
<dbReference type="RefSeq" id="WP_012750898.1">
    <property type="nucleotide sequence ID" value="NC_012803.1"/>
</dbReference>
<dbReference type="SMR" id="C5CCG1"/>
<dbReference type="STRING" id="465515.Mlut_12680"/>
<dbReference type="EnsemblBacteria" id="ACS30773">
    <property type="protein sequence ID" value="ACS30773"/>
    <property type="gene ID" value="Mlut_12680"/>
</dbReference>
<dbReference type="GeneID" id="93345424"/>
<dbReference type="KEGG" id="mlu:Mlut_12680"/>
<dbReference type="PATRIC" id="fig|465515.4.peg.1209"/>
<dbReference type="eggNOG" id="COG0082">
    <property type="taxonomic scope" value="Bacteria"/>
</dbReference>
<dbReference type="HOGENOM" id="CLU_034547_2_0_11"/>
<dbReference type="UniPathway" id="UPA00053">
    <property type="reaction ID" value="UER00090"/>
</dbReference>
<dbReference type="Proteomes" id="UP000000738">
    <property type="component" value="Chromosome"/>
</dbReference>
<dbReference type="GO" id="GO:0005829">
    <property type="term" value="C:cytosol"/>
    <property type="evidence" value="ECO:0007669"/>
    <property type="project" value="TreeGrafter"/>
</dbReference>
<dbReference type="GO" id="GO:0004107">
    <property type="term" value="F:chorismate synthase activity"/>
    <property type="evidence" value="ECO:0007669"/>
    <property type="project" value="UniProtKB-UniRule"/>
</dbReference>
<dbReference type="GO" id="GO:0010181">
    <property type="term" value="F:FMN binding"/>
    <property type="evidence" value="ECO:0007669"/>
    <property type="project" value="TreeGrafter"/>
</dbReference>
<dbReference type="GO" id="GO:0008652">
    <property type="term" value="P:amino acid biosynthetic process"/>
    <property type="evidence" value="ECO:0007669"/>
    <property type="project" value="UniProtKB-KW"/>
</dbReference>
<dbReference type="GO" id="GO:0009073">
    <property type="term" value="P:aromatic amino acid family biosynthetic process"/>
    <property type="evidence" value="ECO:0007669"/>
    <property type="project" value="UniProtKB-KW"/>
</dbReference>
<dbReference type="GO" id="GO:0009423">
    <property type="term" value="P:chorismate biosynthetic process"/>
    <property type="evidence" value="ECO:0007669"/>
    <property type="project" value="UniProtKB-UniRule"/>
</dbReference>
<dbReference type="CDD" id="cd07304">
    <property type="entry name" value="Chorismate_synthase"/>
    <property type="match status" value="1"/>
</dbReference>
<dbReference type="FunFam" id="3.60.150.10:FF:000002">
    <property type="entry name" value="Chorismate synthase"/>
    <property type="match status" value="1"/>
</dbReference>
<dbReference type="Gene3D" id="3.60.150.10">
    <property type="entry name" value="Chorismate synthase AroC"/>
    <property type="match status" value="1"/>
</dbReference>
<dbReference type="HAMAP" id="MF_00300">
    <property type="entry name" value="Chorismate_synth"/>
    <property type="match status" value="1"/>
</dbReference>
<dbReference type="InterPro" id="IPR000453">
    <property type="entry name" value="Chorismate_synth"/>
</dbReference>
<dbReference type="InterPro" id="IPR035904">
    <property type="entry name" value="Chorismate_synth_AroC_sf"/>
</dbReference>
<dbReference type="InterPro" id="IPR020541">
    <property type="entry name" value="Chorismate_synthase_CS"/>
</dbReference>
<dbReference type="NCBIfam" id="TIGR00033">
    <property type="entry name" value="aroC"/>
    <property type="match status" value="1"/>
</dbReference>
<dbReference type="NCBIfam" id="NF003793">
    <property type="entry name" value="PRK05382.1"/>
    <property type="match status" value="1"/>
</dbReference>
<dbReference type="PANTHER" id="PTHR21085">
    <property type="entry name" value="CHORISMATE SYNTHASE"/>
    <property type="match status" value="1"/>
</dbReference>
<dbReference type="PANTHER" id="PTHR21085:SF0">
    <property type="entry name" value="CHORISMATE SYNTHASE"/>
    <property type="match status" value="1"/>
</dbReference>
<dbReference type="Pfam" id="PF01264">
    <property type="entry name" value="Chorismate_synt"/>
    <property type="match status" value="1"/>
</dbReference>
<dbReference type="PIRSF" id="PIRSF001456">
    <property type="entry name" value="Chorismate_synth"/>
    <property type="match status" value="1"/>
</dbReference>
<dbReference type="SUPFAM" id="SSF103263">
    <property type="entry name" value="Chorismate synthase, AroC"/>
    <property type="match status" value="1"/>
</dbReference>
<dbReference type="PROSITE" id="PS00787">
    <property type="entry name" value="CHORISMATE_SYNTHASE_1"/>
    <property type="match status" value="1"/>
</dbReference>
<dbReference type="PROSITE" id="PS00788">
    <property type="entry name" value="CHORISMATE_SYNTHASE_2"/>
    <property type="match status" value="1"/>
</dbReference>
<dbReference type="PROSITE" id="PS00789">
    <property type="entry name" value="CHORISMATE_SYNTHASE_3"/>
    <property type="match status" value="1"/>
</dbReference>
<comment type="function">
    <text evidence="1">Catalyzes the anti-1,4-elimination of the C-3 phosphate and the C-6 proR hydrogen from 5-enolpyruvylshikimate-3-phosphate (EPSP) to yield chorismate, which is the branch point compound that serves as the starting substrate for the three terminal pathways of aromatic amino acid biosynthesis. This reaction introduces a second double bond into the aromatic ring system.</text>
</comment>
<comment type="catalytic activity">
    <reaction evidence="1">
        <text>5-O-(1-carboxyvinyl)-3-phosphoshikimate = chorismate + phosphate</text>
        <dbReference type="Rhea" id="RHEA:21020"/>
        <dbReference type="ChEBI" id="CHEBI:29748"/>
        <dbReference type="ChEBI" id="CHEBI:43474"/>
        <dbReference type="ChEBI" id="CHEBI:57701"/>
        <dbReference type="EC" id="4.2.3.5"/>
    </reaction>
</comment>
<comment type="cofactor">
    <cofactor evidence="1">
        <name>FMNH2</name>
        <dbReference type="ChEBI" id="CHEBI:57618"/>
    </cofactor>
    <text evidence="1">Reduced FMN (FMNH(2)).</text>
</comment>
<comment type="pathway">
    <text evidence="1">Metabolic intermediate biosynthesis; chorismate biosynthesis; chorismate from D-erythrose 4-phosphate and phosphoenolpyruvate: step 7/7.</text>
</comment>
<comment type="subunit">
    <text evidence="1">Homotetramer.</text>
</comment>
<comment type="similarity">
    <text evidence="1">Belongs to the chorismate synthase family.</text>
</comment>
<name>AROC_MICLC</name>
<proteinExistence type="inferred from homology"/>
<evidence type="ECO:0000255" key="1">
    <source>
        <dbReference type="HAMAP-Rule" id="MF_00300"/>
    </source>
</evidence>
<evidence type="ECO:0000256" key="2">
    <source>
        <dbReference type="SAM" id="MobiDB-lite"/>
    </source>
</evidence>